<proteinExistence type="evidence at protein level"/>
<gene>
    <name type="primary">ppiA</name>
    <name type="synonym">rot</name>
    <name type="synonym">rotA</name>
    <name type="ordered locus">b3363</name>
    <name type="ordered locus">JW3326</name>
</gene>
<dbReference type="EC" id="5.2.1.8" evidence="4"/>
<dbReference type="EMBL" id="M55429">
    <property type="protein sequence ID" value="AAA23451.1"/>
    <property type="molecule type" value="Genomic_DNA"/>
</dbReference>
<dbReference type="EMBL" id="M28363">
    <property type="protein sequence ID" value="AAA23772.1"/>
    <property type="molecule type" value="Genomic_DNA"/>
</dbReference>
<dbReference type="EMBL" id="U18997">
    <property type="protein sequence ID" value="AAA58160.1"/>
    <property type="molecule type" value="Genomic_DNA"/>
</dbReference>
<dbReference type="EMBL" id="U00096">
    <property type="protein sequence ID" value="AAC76388.1"/>
    <property type="molecule type" value="Genomic_DNA"/>
</dbReference>
<dbReference type="EMBL" id="AP009048">
    <property type="protein sequence ID" value="BAE77927.1"/>
    <property type="molecule type" value="Genomic_DNA"/>
</dbReference>
<dbReference type="EMBL" id="M32354">
    <property type="protein sequence ID" value="AAA24261.1"/>
    <property type="molecule type" value="Genomic_DNA"/>
</dbReference>
<dbReference type="PIR" id="A37964">
    <property type="entry name" value="CSECA"/>
</dbReference>
<dbReference type="RefSeq" id="NP_417822.1">
    <property type="nucleotide sequence ID" value="NC_000913.3"/>
</dbReference>
<dbReference type="RefSeq" id="WP_000477225.1">
    <property type="nucleotide sequence ID" value="NZ_STEB01000004.1"/>
</dbReference>
<dbReference type="PDB" id="1CLH">
    <property type="method" value="NMR"/>
    <property type="chains" value="A=25-190"/>
</dbReference>
<dbReference type="PDB" id="1J2A">
    <property type="method" value="X-ray"/>
    <property type="resolution" value="1.80 A"/>
    <property type="chains" value="A=25-190"/>
</dbReference>
<dbReference type="PDB" id="1V9T">
    <property type="method" value="X-ray"/>
    <property type="resolution" value="1.70 A"/>
    <property type="chains" value="A/B=25-190"/>
</dbReference>
<dbReference type="PDB" id="1VAI">
    <property type="method" value="X-ray"/>
    <property type="resolution" value="1.80 A"/>
    <property type="chains" value="A/B=25-190"/>
</dbReference>
<dbReference type="PDB" id="7ZFM">
    <property type="method" value="X-ray"/>
    <property type="resolution" value="1.71 A"/>
    <property type="chains" value="A/B=25-187"/>
</dbReference>
<dbReference type="PDB" id="8XCK">
    <property type="method" value="EM"/>
    <property type="resolution" value="2.75 A"/>
    <property type="chains" value="f/j/z=1-190"/>
</dbReference>
<dbReference type="PDBsum" id="1CLH"/>
<dbReference type="PDBsum" id="1J2A"/>
<dbReference type="PDBsum" id="1V9T"/>
<dbReference type="PDBsum" id="1VAI"/>
<dbReference type="PDBsum" id="7ZFM"/>
<dbReference type="PDBsum" id="8XCK"/>
<dbReference type="BMRB" id="P0AFL3"/>
<dbReference type="EMDB" id="EMD-38246"/>
<dbReference type="SMR" id="P0AFL3"/>
<dbReference type="BioGRID" id="4261085">
    <property type="interactions" value="160"/>
</dbReference>
<dbReference type="DIP" id="DIP-48080N"/>
<dbReference type="FunCoup" id="P0AFL3">
    <property type="interactions" value="288"/>
</dbReference>
<dbReference type="IntAct" id="P0AFL3">
    <property type="interactions" value="1"/>
</dbReference>
<dbReference type="STRING" id="511145.b3363"/>
<dbReference type="DrugBank" id="DB08168">
    <property type="generic name" value="Coumarin 120"/>
</dbReference>
<dbReference type="jPOST" id="P0AFL3"/>
<dbReference type="PaxDb" id="511145-b3363"/>
<dbReference type="EnsemblBacteria" id="AAC76388">
    <property type="protein sequence ID" value="AAC76388"/>
    <property type="gene ID" value="b3363"/>
</dbReference>
<dbReference type="GeneID" id="93778634"/>
<dbReference type="GeneID" id="947870"/>
<dbReference type="KEGG" id="ecj:JW3326"/>
<dbReference type="KEGG" id="eco:b3363"/>
<dbReference type="KEGG" id="ecoc:C3026_18265"/>
<dbReference type="PATRIC" id="fig|1411691.4.peg.3367"/>
<dbReference type="EchoBASE" id="EB0750"/>
<dbReference type="eggNOG" id="COG0652">
    <property type="taxonomic scope" value="Bacteria"/>
</dbReference>
<dbReference type="HOGENOM" id="CLU_012062_16_9_6"/>
<dbReference type="InParanoid" id="P0AFL3"/>
<dbReference type="OMA" id="SVWGQVI"/>
<dbReference type="OrthoDB" id="9807797at2"/>
<dbReference type="PhylomeDB" id="P0AFL3"/>
<dbReference type="BioCyc" id="EcoCyc:EG10757-MONOMER"/>
<dbReference type="BioCyc" id="MetaCyc:EG10757-MONOMER"/>
<dbReference type="EvolutionaryTrace" id="P0AFL3"/>
<dbReference type="PRO" id="PR:P0AFL3"/>
<dbReference type="Proteomes" id="UP000000625">
    <property type="component" value="Chromosome"/>
</dbReference>
<dbReference type="GO" id="GO:0030288">
    <property type="term" value="C:outer membrane-bounded periplasmic space"/>
    <property type="evidence" value="ECO:0000314"/>
    <property type="project" value="EcoCyc"/>
</dbReference>
<dbReference type="GO" id="GO:0042597">
    <property type="term" value="C:periplasmic space"/>
    <property type="evidence" value="ECO:0000314"/>
    <property type="project" value="EcoliWiki"/>
</dbReference>
<dbReference type="GO" id="GO:0003755">
    <property type="term" value="F:peptidyl-prolyl cis-trans isomerase activity"/>
    <property type="evidence" value="ECO:0000314"/>
    <property type="project" value="EcoCyc"/>
</dbReference>
<dbReference type="GO" id="GO:0006457">
    <property type="term" value="P:protein folding"/>
    <property type="evidence" value="ECO:0007669"/>
    <property type="project" value="InterPro"/>
</dbReference>
<dbReference type="CDD" id="cd01920">
    <property type="entry name" value="cyclophilin_EcCYP_like"/>
    <property type="match status" value="1"/>
</dbReference>
<dbReference type="FunFam" id="2.40.100.10:FF:000006">
    <property type="entry name" value="Peptidyl-prolyl cis-trans isomerase"/>
    <property type="match status" value="1"/>
</dbReference>
<dbReference type="Gene3D" id="2.40.100.10">
    <property type="entry name" value="Cyclophilin-like"/>
    <property type="match status" value="1"/>
</dbReference>
<dbReference type="InterPro" id="IPR029000">
    <property type="entry name" value="Cyclophilin-like_dom_sf"/>
</dbReference>
<dbReference type="InterPro" id="IPR020892">
    <property type="entry name" value="Cyclophilin-type_PPIase_CS"/>
</dbReference>
<dbReference type="InterPro" id="IPR002130">
    <property type="entry name" value="Cyclophilin-type_PPIase_dom"/>
</dbReference>
<dbReference type="InterPro" id="IPR044665">
    <property type="entry name" value="E_coli_cyclophilin_A-like"/>
</dbReference>
<dbReference type="NCBIfam" id="NF008151">
    <property type="entry name" value="PRK10903.1"/>
    <property type="match status" value="1"/>
</dbReference>
<dbReference type="PANTHER" id="PTHR43246">
    <property type="entry name" value="PEPTIDYL-PROLYL CIS-TRANS ISOMERASE CYP38, CHLOROPLASTIC"/>
    <property type="match status" value="1"/>
</dbReference>
<dbReference type="Pfam" id="PF00160">
    <property type="entry name" value="Pro_isomerase"/>
    <property type="match status" value="1"/>
</dbReference>
<dbReference type="PRINTS" id="PR00153">
    <property type="entry name" value="CSAPPISMRASE"/>
</dbReference>
<dbReference type="SUPFAM" id="SSF50891">
    <property type="entry name" value="Cyclophilin-like"/>
    <property type="match status" value="1"/>
</dbReference>
<dbReference type="PROSITE" id="PS00170">
    <property type="entry name" value="CSA_PPIASE_1"/>
    <property type="match status" value="1"/>
</dbReference>
<dbReference type="PROSITE" id="PS50072">
    <property type="entry name" value="CSA_PPIASE_2"/>
    <property type="match status" value="1"/>
</dbReference>
<comment type="function">
    <text evidence="4 6">PPIases accelerate the folding of proteins (Probable). It catalyzes the cis-trans isomerization of proline imidic peptide bonds in oligopeptides (PubMed:2190212).</text>
</comment>
<comment type="catalytic activity">
    <reaction evidence="4">
        <text>[protein]-peptidylproline (omega=180) = [protein]-peptidylproline (omega=0)</text>
        <dbReference type="Rhea" id="RHEA:16237"/>
        <dbReference type="Rhea" id="RHEA-COMP:10747"/>
        <dbReference type="Rhea" id="RHEA-COMP:10748"/>
        <dbReference type="ChEBI" id="CHEBI:83833"/>
        <dbReference type="ChEBI" id="CHEBI:83834"/>
        <dbReference type="EC" id="5.2.1.8"/>
    </reaction>
    <physiologicalReaction direction="left-to-right" evidence="4">
        <dbReference type="Rhea" id="RHEA:16238"/>
    </physiologicalReaction>
    <physiologicalReaction direction="right-to-left" evidence="4">
        <dbReference type="Rhea" id="RHEA:16239"/>
    </physiologicalReaction>
</comment>
<comment type="activity regulation">
    <text evidence="2">Inhibition by cyclosporin A with a Ki of 25 to 50 mu-mol, a concentration 1000-fold higher than that required for eukaryotic PPIases.</text>
</comment>
<comment type="subcellular location">
    <subcellularLocation>
        <location evidence="4">Periplasm</location>
    </subcellularLocation>
</comment>
<comment type="similarity">
    <text evidence="6">Belongs to the cyclophilin-type PPIase family.</text>
</comment>
<keyword id="KW-0002">3D-structure</keyword>
<keyword id="KW-0903">Direct protein sequencing</keyword>
<keyword id="KW-0413">Isomerase</keyword>
<keyword id="KW-0574">Periplasm</keyword>
<keyword id="KW-1185">Reference proteome</keyword>
<keyword id="KW-0697">Rotamase</keyword>
<keyword id="KW-0732">Signal</keyword>
<evidence type="ECO:0000255" key="1">
    <source>
        <dbReference type="PROSITE-ProRule" id="PRU00156"/>
    </source>
</evidence>
<evidence type="ECO:0000269" key="2">
    <source>
    </source>
</evidence>
<evidence type="ECO:0000269" key="3">
    <source>
    </source>
</evidence>
<evidence type="ECO:0000269" key="4">
    <source>
    </source>
</evidence>
<evidence type="ECO:0000303" key="5">
    <source>
    </source>
</evidence>
<evidence type="ECO:0000305" key="6"/>
<evidence type="ECO:0007829" key="7">
    <source>
        <dbReference type="PDB" id="1CLH"/>
    </source>
</evidence>
<evidence type="ECO:0007829" key="8">
    <source>
        <dbReference type="PDB" id="1V9T"/>
    </source>
</evidence>
<evidence type="ECO:0007829" key="9">
    <source>
        <dbReference type="PDB" id="8XCK"/>
    </source>
</evidence>
<feature type="signal peptide" evidence="4">
    <location>
        <begin position="1"/>
        <end position="24"/>
    </location>
</feature>
<feature type="chain" id="PRO_0000025497" description="Peptidyl-prolyl cis-trans isomerase A">
    <location>
        <begin position="25"/>
        <end position="190"/>
    </location>
</feature>
<feature type="domain" description="PPIase cyclophilin-type" evidence="1">
    <location>
        <begin position="27"/>
        <end position="188"/>
    </location>
</feature>
<feature type="mutagenesis site" description="Enhances susceptibility to CSA inhibition." evidence="3">
    <original>F</original>
    <variation>W</variation>
    <location>
        <position position="136"/>
    </location>
</feature>
<feature type="strand" evidence="8">
    <location>
        <begin position="30"/>
        <end position="35"/>
    </location>
</feature>
<feature type="strand" evidence="8">
    <location>
        <begin position="38"/>
        <end position="44"/>
    </location>
</feature>
<feature type="turn" evidence="8">
    <location>
        <begin position="46"/>
        <end position="48"/>
    </location>
</feature>
<feature type="helix" evidence="8">
    <location>
        <begin position="50"/>
        <end position="61"/>
    </location>
</feature>
<feature type="turn" evidence="8">
    <location>
        <begin position="62"/>
        <end position="67"/>
    </location>
</feature>
<feature type="strand" evidence="8">
    <location>
        <begin position="69"/>
        <end position="74"/>
    </location>
</feature>
<feature type="turn" evidence="8">
    <location>
        <begin position="75"/>
        <end position="77"/>
    </location>
</feature>
<feature type="strand" evidence="8">
    <location>
        <begin position="78"/>
        <end position="84"/>
    </location>
</feature>
<feature type="helix" evidence="8">
    <location>
        <begin position="101"/>
        <end position="103"/>
    </location>
</feature>
<feature type="strand" evidence="8">
    <location>
        <begin position="111"/>
        <end position="114"/>
    </location>
</feature>
<feature type="strand" evidence="7">
    <location>
        <begin position="118"/>
        <end position="121"/>
    </location>
</feature>
<feature type="strand" evidence="8">
    <location>
        <begin position="127"/>
        <end position="132"/>
    </location>
</feature>
<feature type="helix" evidence="8">
    <location>
        <begin position="135"/>
        <end position="137"/>
    </location>
</feature>
<feature type="strand" evidence="9">
    <location>
        <begin position="141"/>
        <end position="143"/>
    </location>
</feature>
<feature type="strand" evidence="8">
    <location>
        <begin position="148"/>
        <end position="154"/>
    </location>
</feature>
<feature type="helix" evidence="8">
    <location>
        <begin position="156"/>
        <end position="163"/>
    </location>
</feature>
<feature type="strand" evidence="8">
    <location>
        <begin position="167"/>
        <end position="170"/>
    </location>
</feature>
<feature type="strand" evidence="8">
    <location>
        <begin position="173"/>
        <end position="179"/>
    </location>
</feature>
<feature type="strand" evidence="8">
    <location>
        <begin position="182"/>
        <end position="188"/>
    </location>
</feature>
<organism>
    <name type="scientific">Escherichia coli (strain K12)</name>
    <dbReference type="NCBI Taxonomy" id="83333"/>
    <lineage>
        <taxon>Bacteria</taxon>
        <taxon>Pseudomonadati</taxon>
        <taxon>Pseudomonadota</taxon>
        <taxon>Gammaproteobacteria</taxon>
        <taxon>Enterobacterales</taxon>
        <taxon>Enterobacteriaceae</taxon>
        <taxon>Escherichia</taxon>
    </lineage>
</organism>
<sequence>MFKSTLAAMAAVFALSALSPAAMAAKGDPHVLLTTSAGNIELELDKQKAPVSVQNFVDYVNSGFYNNTTFHRVIPGFMIQGGGFTEQMQQKKPNPPIKNEADNGLRNTRGTIAMARTADKDSATSQFFINVADNAFLDHGQRDFGYAVFGKVVKGMDVADKISQVPTHDVGPYQNVPSKPVVILSAKVLP</sequence>
<reference key="1">
    <citation type="journal article" date="1991" name="Biochemistry">
        <title>Two distinct forms of peptidylprolyl-cis-trans-isomerase are expressed separately in periplasmic and cytoplasmic compartments of Escherichia coli cells.</title>
        <authorList>
            <person name="Hayano T."/>
            <person name="Takahashi N."/>
            <person name="Kato S."/>
            <person name="Maki N."/>
            <person name="Suzuki M."/>
        </authorList>
    </citation>
    <scope>NUCLEOTIDE SEQUENCE [GENOMIC DNA]</scope>
</reference>
<reference key="2">
    <citation type="journal article" date="1989" name="J. Bacteriol.">
        <title>Nucleotide sequences of fic and fic-1 genes involved in cell filamentation induced by cyclic AMP in Escherichia coli.</title>
        <authorList>
            <person name="Kawamukai M."/>
            <person name="Matsuda H."/>
            <person name="Fujii W."/>
            <person name="Utsumi R."/>
            <person name="Komano T."/>
        </authorList>
    </citation>
    <scope>NUCLEOTIDE SEQUENCE [GENOMIC DNA]</scope>
</reference>
<reference key="3">
    <citation type="journal article" date="1997" name="Science">
        <title>The complete genome sequence of Escherichia coli K-12.</title>
        <authorList>
            <person name="Blattner F.R."/>
            <person name="Plunkett G. III"/>
            <person name="Bloch C.A."/>
            <person name="Perna N.T."/>
            <person name="Burland V."/>
            <person name="Riley M."/>
            <person name="Collado-Vides J."/>
            <person name="Glasner J.D."/>
            <person name="Rode C.K."/>
            <person name="Mayhew G.F."/>
            <person name="Gregor J."/>
            <person name="Davis N.W."/>
            <person name="Kirkpatrick H.A."/>
            <person name="Goeden M.A."/>
            <person name="Rose D.J."/>
            <person name="Mau B."/>
            <person name="Shao Y."/>
        </authorList>
    </citation>
    <scope>NUCLEOTIDE SEQUENCE [LARGE SCALE GENOMIC DNA]</scope>
    <source>
        <strain>K12 / MG1655 / ATCC 47076</strain>
    </source>
</reference>
<reference key="4">
    <citation type="journal article" date="2006" name="Mol. Syst. Biol.">
        <title>Highly accurate genome sequences of Escherichia coli K-12 strains MG1655 and W3110.</title>
        <authorList>
            <person name="Hayashi K."/>
            <person name="Morooka N."/>
            <person name="Yamamoto Y."/>
            <person name="Fujita K."/>
            <person name="Isono K."/>
            <person name="Choi S."/>
            <person name="Ohtsubo E."/>
            <person name="Baba T."/>
            <person name="Wanner B.L."/>
            <person name="Mori H."/>
            <person name="Horiuchi T."/>
        </authorList>
    </citation>
    <scope>NUCLEOTIDE SEQUENCE [LARGE SCALE GENOMIC DNA]</scope>
    <source>
        <strain>K12 / W3110 / ATCC 27325 / DSM 5911</strain>
    </source>
</reference>
<reference key="5">
    <citation type="journal article" date="1990" name="J. Bacteriol.">
        <title>Chromosomal organization and expression of Escherichia coli pabA.</title>
        <authorList>
            <person name="Tran P.V."/>
            <person name="Bannor T.A."/>
            <person name="Doktor S.Z."/>
            <person name="Nichols B.P."/>
        </authorList>
    </citation>
    <scope>NUCLEOTIDE SEQUENCE [GENOMIC DNA] OF 37-190</scope>
</reference>
<reference key="6">
    <citation type="journal article" date="1990" name="Proc. Natl. Acad. Sci. U.S.A.">
        <title>Peptidyl-prolyl cis-trans-isomerase from Escherichia coli: a periplasmic homolog of cyclophilin that is not inhibited by cyclosporin A.</title>
        <authorList>
            <person name="Liu J."/>
            <person name="Walsh C.T."/>
        </authorList>
    </citation>
    <scope>FUNCTION</scope>
    <scope>PROTEIN SEQUENCE OF 25-36</scope>
    <scope>CATALYTIC ACTIVITY</scope>
    <scope>SUBCELLULAR LOCATION</scope>
</reference>
<reference key="7">
    <citation type="journal article" date="1992" name="Eur. J. Biochem.">
        <title>Structural and functional characterization of Escherichia coli peptidyl-prolyl cis-trans isomerases.</title>
        <authorList>
            <person name="Compton L.A."/>
            <person name="Davis J.M."/>
            <person name="Macdonald J.R."/>
            <person name="Baechinger H.P."/>
        </authorList>
    </citation>
    <scope>ACTIVITY REGULATION</scope>
</reference>
<reference key="8">
    <citation type="journal article" date="1991" name="Biochemistry">
        <title>Human and Escherichia coli cyclophilins: sensitivity to inhibition by the immunosuppressant cyclosporin A correlates with a specific tryptophan residue.</title>
        <authorList>
            <person name="Liu J."/>
            <person name="Chen C.-M."/>
            <person name="Walsh C.T."/>
        </authorList>
    </citation>
    <scope>MUTAGENESIS OF PHE-136</scope>
</reference>
<reference key="9">
    <citation type="journal article" date="1994" name="Biochemistry">
        <title>Three-dimensional solution structure of Escherichia coli periplasmic cyclophilin.</title>
        <authorList>
            <person name="Clubb R.T."/>
            <person name="Ferguson S.B."/>
            <person name="Walsh C.T."/>
            <person name="Wagner G."/>
        </authorList>
    </citation>
    <scope>STRUCTURE BY NMR</scope>
</reference>
<reference key="10">
    <citation type="journal article" date="1994" name="Biochemistry">
        <title>The mutant Escherichia coli F112W cyclophilin binds cyclosporin A in nearly identical conformation as human cyclophilin.</title>
        <authorList>
            <person name="Fejzo J."/>
            <person name="Etzkorn F.A."/>
            <person name="Clubb R.T."/>
            <person name="Shi Y."/>
            <person name="Walsh C.T."/>
            <person name="Wagner G."/>
        </authorList>
    </citation>
    <scope>STRUCTURE BY NMR OF MUTANT TRP-136</scope>
</reference>
<name>PPIA_ECOLI</name>
<protein>
    <recommendedName>
        <fullName evidence="5">Peptidyl-prolyl cis-trans isomerase A</fullName>
        <shortName evidence="5">PPIase A</shortName>
        <ecNumber evidence="4">5.2.1.8</ecNumber>
    </recommendedName>
    <alternativeName>
        <fullName>Cyclophilin A</fullName>
    </alternativeName>
    <alternativeName>
        <fullName evidence="5">Rotamase A</fullName>
    </alternativeName>
</protein>
<accession>P0AFL3</accession>
<accession>P20752</accession>
<accession>Q2M729</accession>